<feature type="chain" id="PRO_0000226984" description="Keratinocyte-associated protein 3">
    <location>
        <begin position="1"/>
        <end position="240"/>
    </location>
</feature>
<feature type="transmembrane region" description="Helical" evidence="1">
    <location>
        <begin position="21"/>
        <end position="41"/>
    </location>
</feature>
<feature type="transmembrane region" description="Helical" evidence="1">
    <location>
        <begin position="63"/>
        <end position="83"/>
    </location>
</feature>
<feature type="transmembrane region" description="Helical" evidence="1">
    <location>
        <begin position="95"/>
        <end position="115"/>
    </location>
</feature>
<feature type="transmembrane region" description="Helical" evidence="1">
    <location>
        <begin position="163"/>
        <end position="183"/>
    </location>
</feature>
<gene>
    <name type="primary">KRTCAP3</name>
</gene>
<reference key="1">
    <citation type="submission" date="2005-08" db="EMBL/GenBank/DDBJ databases">
        <authorList>
            <consortium name="NIH - Mammalian Gene Collection (MGC) project"/>
        </authorList>
    </citation>
    <scope>NUCLEOTIDE SEQUENCE [LARGE SCALE MRNA]</scope>
    <source>
        <strain>Crossbred X Angus</strain>
        <tissue>Ileum</tissue>
    </source>
</reference>
<accession>Q3SZ72</accession>
<comment type="subcellular location">
    <subcellularLocation>
        <location>Membrane</location>
        <topology>Multi-pass membrane protein</topology>
    </subcellularLocation>
</comment>
<comment type="similarity">
    <text evidence="2">Belongs to the TMEM54 family.</text>
</comment>
<name>KCP3_BOVIN</name>
<keyword id="KW-0472">Membrane</keyword>
<keyword id="KW-1185">Reference proteome</keyword>
<keyword id="KW-0812">Transmembrane</keyword>
<keyword id="KW-1133">Transmembrane helix</keyword>
<organism>
    <name type="scientific">Bos taurus</name>
    <name type="common">Bovine</name>
    <dbReference type="NCBI Taxonomy" id="9913"/>
    <lineage>
        <taxon>Eukaryota</taxon>
        <taxon>Metazoa</taxon>
        <taxon>Chordata</taxon>
        <taxon>Craniata</taxon>
        <taxon>Vertebrata</taxon>
        <taxon>Euteleostomi</taxon>
        <taxon>Mammalia</taxon>
        <taxon>Eutheria</taxon>
        <taxon>Laurasiatheria</taxon>
        <taxon>Artiodactyla</taxon>
        <taxon>Ruminantia</taxon>
        <taxon>Pecora</taxon>
        <taxon>Bovidae</taxon>
        <taxon>Bovinae</taxon>
        <taxon>Bos</taxon>
    </lineage>
</organism>
<protein>
    <recommendedName>
        <fullName>Keratinocyte-associated protein 3</fullName>
        <shortName>KCP-3</shortName>
    </recommendedName>
</protein>
<evidence type="ECO:0000255" key="1"/>
<evidence type="ECO:0000305" key="2"/>
<sequence length="240" mass="25898">MRCRRLCAFDAARGPRRLMRVGLALILVGHVNLLLGAVLHGTVLRHVANPRGAVTPEYTTANVISVGSGLLSVSLGLVALLASRNLFRPRLHWALLALALVNLLLSAACSLGLLLAVSLTVANGGRRLIADCHPGLLDPLVPLDQGSGHADCPFDPTKIYDTALALWIPSVFMSAAEAALSGYCCVAALTLRGVGPCRKDGLQEQLEELTELEFPKRKWQENVQLLDQTREIRTSQKSWV</sequence>
<proteinExistence type="evidence at transcript level"/>
<dbReference type="EMBL" id="BC103079">
    <property type="protein sequence ID" value="AAI03080.1"/>
    <property type="molecule type" value="mRNA"/>
</dbReference>
<dbReference type="RefSeq" id="NP_001030234.1">
    <property type="nucleotide sequence ID" value="NM_001035062.2"/>
</dbReference>
<dbReference type="SMR" id="Q3SZ72"/>
<dbReference type="FunCoup" id="Q3SZ72">
    <property type="interactions" value="103"/>
</dbReference>
<dbReference type="STRING" id="9913.ENSBTAP00000069121"/>
<dbReference type="PaxDb" id="9913-ENSBTAP00000024162"/>
<dbReference type="GeneID" id="508550"/>
<dbReference type="KEGG" id="bta:508550"/>
<dbReference type="CTD" id="200634"/>
<dbReference type="eggNOG" id="ENOG502QWFA">
    <property type="taxonomic scope" value="Eukaryota"/>
</dbReference>
<dbReference type="InParanoid" id="Q3SZ72"/>
<dbReference type="OrthoDB" id="8718199at2759"/>
<dbReference type="Proteomes" id="UP000009136">
    <property type="component" value="Unplaced"/>
</dbReference>
<dbReference type="GO" id="GO:0016020">
    <property type="term" value="C:membrane"/>
    <property type="evidence" value="ECO:0007669"/>
    <property type="project" value="UniProtKB-SubCell"/>
</dbReference>
<dbReference type="InterPro" id="IPR020977">
    <property type="entry name" value="Beta-casein-like"/>
</dbReference>
<dbReference type="PANTHER" id="PTHR31258">
    <property type="entry name" value="KERATINOCYTE-ASSOCIATED PROTEIN 3"/>
    <property type="match status" value="1"/>
</dbReference>
<dbReference type="PANTHER" id="PTHR31258:SF1">
    <property type="entry name" value="KERATINOCYTE-ASSOCIATED PROTEIN 3"/>
    <property type="match status" value="1"/>
</dbReference>
<dbReference type="Pfam" id="PF12304">
    <property type="entry name" value="BCLP"/>
    <property type="match status" value="1"/>
</dbReference>